<reference key="1">
    <citation type="submission" date="2007-04" db="EMBL/GenBank/DDBJ databases">
        <title>Complete sequence of chromosome of Mycobacterium gilvum PYR-GCK.</title>
        <authorList>
            <consortium name="US DOE Joint Genome Institute"/>
            <person name="Copeland A."/>
            <person name="Lucas S."/>
            <person name="Lapidus A."/>
            <person name="Barry K."/>
            <person name="Detter J.C."/>
            <person name="Glavina del Rio T."/>
            <person name="Hammon N."/>
            <person name="Israni S."/>
            <person name="Dalin E."/>
            <person name="Tice H."/>
            <person name="Pitluck S."/>
            <person name="Chain P."/>
            <person name="Malfatti S."/>
            <person name="Shin M."/>
            <person name="Vergez L."/>
            <person name="Schmutz J."/>
            <person name="Larimer F."/>
            <person name="Land M."/>
            <person name="Hauser L."/>
            <person name="Kyrpides N."/>
            <person name="Mikhailova N."/>
            <person name="Miller C."/>
            <person name="Richardson P."/>
        </authorList>
    </citation>
    <scope>NUCLEOTIDE SEQUENCE [LARGE SCALE GENOMIC DNA]</scope>
    <source>
        <strain>PYR-GCK</strain>
    </source>
</reference>
<feature type="chain" id="PRO_1000130295" description="Ribosomal RNA small subunit methyltransferase A">
    <location>
        <begin position="1"/>
        <end position="314"/>
    </location>
</feature>
<feature type="region of interest" description="Disordered" evidence="2">
    <location>
        <begin position="291"/>
        <end position="314"/>
    </location>
</feature>
<feature type="compositionally biased region" description="Low complexity" evidence="2">
    <location>
        <begin position="303"/>
        <end position="314"/>
    </location>
</feature>
<feature type="binding site" evidence="1">
    <location>
        <position position="29"/>
    </location>
    <ligand>
        <name>S-adenosyl-L-methionine</name>
        <dbReference type="ChEBI" id="CHEBI:59789"/>
    </ligand>
</feature>
<feature type="binding site" evidence="1">
    <location>
        <position position="31"/>
    </location>
    <ligand>
        <name>S-adenosyl-L-methionine</name>
        <dbReference type="ChEBI" id="CHEBI:59789"/>
    </ligand>
</feature>
<feature type="binding site" evidence="1">
    <location>
        <position position="56"/>
    </location>
    <ligand>
        <name>S-adenosyl-L-methionine</name>
        <dbReference type="ChEBI" id="CHEBI:59789"/>
    </ligand>
</feature>
<feature type="binding site" evidence="1">
    <location>
        <position position="77"/>
    </location>
    <ligand>
        <name>S-adenosyl-L-methionine</name>
        <dbReference type="ChEBI" id="CHEBI:59789"/>
    </ligand>
</feature>
<feature type="binding site" evidence="1">
    <location>
        <position position="107"/>
    </location>
    <ligand>
        <name>S-adenosyl-L-methionine</name>
        <dbReference type="ChEBI" id="CHEBI:59789"/>
    </ligand>
</feature>
<feature type="binding site" evidence="1">
    <location>
        <position position="126"/>
    </location>
    <ligand>
        <name>S-adenosyl-L-methionine</name>
        <dbReference type="ChEBI" id="CHEBI:59789"/>
    </ligand>
</feature>
<protein>
    <recommendedName>
        <fullName evidence="1">Ribosomal RNA small subunit methyltransferase A</fullName>
        <ecNumber evidence="1">2.1.1.182</ecNumber>
    </recommendedName>
    <alternativeName>
        <fullName evidence="1">16S rRNA (adenine(1518)-N(6)/adenine(1519)-N(6))-dimethyltransferase</fullName>
    </alternativeName>
    <alternativeName>
        <fullName evidence="1">16S rRNA dimethyladenosine transferase</fullName>
    </alternativeName>
    <alternativeName>
        <fullName evidence="1">16S rRNA dimethylase</fullName>
    </alternativeName>
    <alternativeName>
        <fullName evidence="1">S-adenosylmethionine-6-N', N'-adenosyl(rRNA) dimethyltransferase</fullName>
    </alternativeName>
</protein>
<comment type="function">
    <text evidence="1">Specifically dimethylates two adjacent adenosines (A1518 and A1519) in the loop of a conserved hairpin near the 3'-end of 16S rRNA in the 30S particle. May play a critical role in biogenesis of 30S subunits.</text>
</comment>
<comment type="catalytic activity">
    <reaction evidence="1">
        <text>adenosine(1518)/adenosine(1519) in 16S rRNA + 4 S-adenosyl-L-methionine = N(6)-dimethyladenosine(1518)/N(6)-dimethyladenosine(1519) in 16S rRNA + 4 S-adenosyl-L-homocysteine + 4 H(+)</text>
        <dbReference type="Rhea" id="RHEA:19609"/>
        <dbReference type="Rhea" id="RHEA-COMP:10232"/>
        <dbReference type="Rhea" id="RHEA-COMP:10233"/>
        <dbReference type="ChEBI" id="CHEBI:15378"/>
        <dbReference type="ChEBI" id="CHEBI:57856"/>
        <dbReference type="ChEBI" id="CHEBI:59789"/>
        <dbReference type="ChEBI" id="CHEBI:74411"/>
        <dbReference type="ChEBI" id="CHEBI:74493"/>
        <dbReference type="EC" id="2.1.1.182"/>
    </reaction>
</comment>
<comment type="subcellular location">
    <subcellularLocation>
        <location evidence="1">Cytoplasm</location>
    </subcellularLocation>
</comment>
<comment type="similarity">
    <text evidence="1">Belongs to the class I-like SAM-binding methyltransferase superfamily. rRNA adenine N(6)-methyltransferase family. RsmA subfamily.</text>
</comment>
<keyword id="KW-0963">Cytoplasm</keyword>
<keyword id="KW-0489">Methyltransferase</keyword>
<keyword id="KW-0694">RNA-binding</keyword>
<keyword id="KW-0698">rRNA processing</keyword>
<keyword id="KW-0949">S-adenosyl-L-methionine</keyword>
<keyword id="KW-0808">Transferase</keyword>
<evidence type="ECO:0000255" key="1">
    <source>
        <dbReference type="HAMAP-Rule" id="MF_00607"/>
    </source>
</evidence>
<evidence type="ECO:0000256" key="2">
    <source>
        <dbReference type="SAM" id="MobiDB-lite"/>
    </source>
</evidence>
<sequence>MTIRLLGRTEIRHLAKSIDFRPRKSFGQNFVHDANTVRRIVSASSVNRSDHVLEVGPGLGSLTLALLDRGARVTAVEIDPVLATQLPTTIAAHSHSEVNRLTVLNRDILTFKQSDMTEMPTALVANLPYNVAVPALLHLLAEFPSIRTVMVMVQAEVAERLAAEPGGKDYGVPSAKVRFFGNVRRYGMVSPTVFWPIPRVYSGLVRIDRYETSPWPTDTEFQEQVFELIDIAFAQRRKTSRNAFAEWAGSGNESASRLLAASIDPSRRGETLSINDFVRLLQRSADWHTVPKADDAGDDADAQAKADGAQVSTL</sequence>
<organism>
    <name type="scientific">Mycolicibacterium gilvum (strain PYR-GCK)</name>
    <name type="common">Mycobacterium gilvum (strain PYR-GCK)</name>
    <dbReference type="NCBI Taxonomy" id="350054"/>
    <lineage>
        <taxon>Bacteria</taxon>
        <taxon>Bacillati</taxon>
        <taxon>Actinomycetota</taxon>
        <taxon>Actinomycetes</taxon>
        <taxon>Mycobacteriales</taxon>
        <taxon>Mycobacteriaceae</taxon>
        <taxon>Mycolicibacterium</taxon>
    </lineage>
</organism>
<proteinExistence type="inferred from homology"/>
<accession>A4T6P3</accession>
<gene>
    <name evidence="1" type="primary">rsmA</name>
    <name evidence="1" type="synonym">ksgA</name>
    <name type="ordered locus">Mflv_1933</name>
</gene>
<name>RSMA_MYCGI</name>
<dbReference type="EC" id="2.1.1.182" evidence="1"/>
<dbReference type="EMBL" id="CP000656">
    <property type="protein sequence ID" value="ABP44413.1"/>
    <property type="molecule type" value="Genomic_DNA"/>
</dbReference>
<dbReference type="SMR" id="A4T6P3"/>
<dbReference type="STRING" id="350054.Mflv_1933"/>
<dbReference type="KEGG" id="mgi:Mflv_1933"/>
<dbReference type="eggNOG" id="COG0030">
    <property type="taxonomic scope" value="Bacteria"/>
</dbReference>
<dbReference type="HOGENOM" id="CLU_041220_1_1_11"/>
<dbReference type="OrthoDB" id="9814755at2"/>
<dbReference type="GO" id="GO:0005829">
    <property type="term" value="C:cytosol"/>
    <property type="evidence" value="ECO:0007669"/>
    <property type="project" value="TreeGrafter"/>
</dbReference>
<dbReference type="GO" id="GO:0052908">
    <property type="term" value="F:16S rRNA (adenine(1518)-N(6)/adenine(1519)-N(6))-dimethyltransferase activity"/>
    <property type="evidence" value="ECO:0007669"/>
    <property type="project" value="UniProtKB-EC"/>
</dbReference>
<dbReference type="GO" id="GO:0003723">
    <property type="term" value="F:RNA binding"/>
    <property type="evidence" value="ECO:0007669"/>
    <property type="project" value="UniProtKB-KW"/>
</dbReference>
<dbReference type="CDD" id="cd02440">
    <property type="entry name" value="AdoMet_MTases"/>
    <property type="match status" value="1"/>
</dbReference>
<dbReference type="FunFam" id="1.10.8.100:FF:000003">
    <property type="entry name" value="Ribosomal RNA small subunit methyltransferase A"/>
    <property type="match status" value="1"/>
</dbReference>
<dbReference type="FunFam" id="3.40.50.150:FF:000023">
    <property type="entry name" value="Ribosomal RNA small subunit methyltransferase A"/>
    <property type="match status" value="1"/>
</dbReference>
<dbReference type="Gene3D" id="1.10.8.100">
    <property type="entry name" value="Ribosomal RNA adenine dimethylase-like, domain 2"/>
    <property type="match status" value="1"/>
</dbReference>
<dbReference type="Gene3D" id="3.40.50.150">
    <property type="entry name" value="Vaccinia Virus protein VP39"/>
    <property type="match status" value="1"/>
</dbReference>
<dbReference type="HAMAP" id="MF_00607">
    <property type="entry name" value="16SrRNA_methyltr_A"/>
    <property type="match status" value="1"/>
</dbReference>
<dbReference type="InterPro" id="IPR001737">
    <property type="entry name" value="KsgA/Erm"/>
</dbReference>
<dbReference type="InterPro" id="IPR023165">
    <property type="entry name" value="rRNA_Ade_diMease-like_C"/>
</dbReference>
<dbReference type="InterPro" id="IPR020596">
    <property type="entry name" value="rRNA_Ade_Mease_Trfase_CS"/>
</dbReference>
<dbReference type="InterPro" id="IPR020598">
    <property type="entry name" value="rRNA_Ade_methylase_Trfase_N"/>
</dbReference>
<dbReference type="InterPro" id="IPR011530">
    <property type="entry name" value="rRNA_adenine_dimethylase"/>
</dbReference>
<dbReference type="InterPro" id="IPR029063">
    <property type="entry name" value="SAM-dependent_MTases_sf"/>
</dbReference>
<dbReference type="NCBIfam" id="TIGR00755">
    <property type="entry name" value="ksgA"/>
    <property type="match status" value="1"/>
</dbReference>
<dbReference type="PANTHER" id="PTHR11727">
    <property type="entry name" value="DIMETHYLADENOSINE TRANSFERASE"/>
    <property type="match status" value="1"/>
</dbReference>
<dbReference type="PANTHER" id="PTHR11727:SF7">
    <property type="entry name" value="DIMETHYLADENOSINE TRANSFERASE-RELATED"/>
    <property type="match status" value="1"/>
</dbReference>
<dbReference type="Pfam" id="PF00398">
    <property type="entry name" value="RrnaAD"/>
    <property type="match status" value="1"/>
</dbReference>
<dbReference type="SMART" id="SM00650">
    <property type="entry name" value="rADc"/>
    <property type="match status" value="1"/>
</dbReference>
<dbReference type="SUPFAM" id="SSF53335">
    <property type="entry name" value="S-adenosyl-L-methionine-dependent methyltransferases"/>
    <property type="match status" value="1"/>
</dbReference>
<dbReference type="PROSITE" id="PS01131">
    <property type="entry name" value="RRNA_A_DIMETH"/>
    <property type="match status" value="1"/>
</dbReference>
<dbReference type="PROSITE" id="PS51689">
    <property type="entry name" value="SAM_RNA_A_N6_MT"/>
    <property type="match status" value="1"/>
</dbReference>